<keyword id="KW-0997">Cell inner membrane</keyword>
<keyword id="KW-1003">Cell membrane</keyword>
<keyword id="KW-0201">Cytochrome c-type biogenesis</keyword>
<keyword id="KW-0349">Heme</keyword>
<keyword id="KW-0408">Iron</keyword>
<keyword id="KW-0472">Membrane</keyword>
<keyword id="KW-0479">Metal-binding</keyword>
<keyword id="KW-0735">Signal-anchor</keyword>
<keyword id="KW-0812">Transmembrane</keyword>
<keyword id="KW-1133">Transmembrane helix</keyword>
<protein>
    <recommendedName>
        <fullName evidence="1">Cytochrome c-type biogenesis protein CcmE</fullName>
    </recommendedName>
    <alternativeName>
        <fullName evidence="1">Cytochrome c maturation protein E</fullName>
    </alternativeName>
    <alternativeName>
        <fullName evidence="1">Heme chaperone CcmE</fullName>
    </alternativeName>
</protein>
<gene>
    <name evidence="1" type="primary">ccmE</name>
    <name evidence="1" type="synonym">cycJ</name>
    <name type="ordered locus">Erum3060</name>
    <name type="ordered locus">ERWE_CDS_03110</name>
</gene>
<proteinExistence type="inferred from homology"/>
<sequence>MKRKYRRLFVVIITLSIFAGSVVLVLGKLKNNVSFFYTPTELLSSSLINRPNIRIGGMVVKGTVQKYDDSIVFHITDLKNYIKVVYKGILPPLFSEGSWIVAKGKMVNGKFIASEILAKHDENYMPNKYKTNDL</sequence>
<name>CCME_EHRRW</name>
<evidence type="ECO:0000255" key="1">
    <source>
        <dbReference type="HAMAP-Rule" id="MF_01959"/>
    </source>
</evidence>
<accession>Q5HBM4</accession>
<accession>Q5FEB7</accession>
<feature type="chain" id="PRO_0000238809" description="Cytochrome c-type biogenesis protein CcmE">
    <location>
        <begin position="1"/>
        <end position="134"/>
    </location>
</feature>
<feature type="topological domain" description="Cytoplasmic" evidence="1">
    <location>
        <begin position="1"/>
        <end position="7"/>
    </location>
</feature>
<feature type="transmembrane region" description="Helical; Signal-anchor for type II membrane protein" evidence="1">
    <location>
        <begin position="8"/>
        <end position="28"/>
    </location>
</feature>
<feature type="topological domain" description="Periplasmic" evidence="1">
    <location>
        <begin position="29"/>
        <end position="134"/>
    </location>
</feature>
<feature type="binding site" description="covalent" evidence="1">
    <location>
        <position position="120"/>
    </location>
    <ligand>
        <name>heme</name>
        <dbReference type="ChEBI" id="CHEBI:30413"/>
    </ligand>
</feature>
<feature type="binding site" description="axial binding residue" evidence="1">
    <location>
        <position position="124"/>
    </location>
    <ligand>
        <name>heme</name>
        <dbReference type="ChEBI" id="CHEBI:30413"/>
    </ligand>
    <ligandPart>
        <name>Fe</name>
        <dbReference type="ChEBI" id="CHEBI:18248"/>
    </ligandPart>
</feature>
<reference key="1">
    <citation type="journal article" date="2005" name="Proc. Natl. Acad. Sci. U.S.A.">
        <title>The genome of the heartwater agent Ehrlichia ruminantium contains multiple tandem repeats of actively variable copy number.</title>
        <authorList>
            <person name="Collins N.E."/>
            <person name="Liebenberg J."/>
            <person name="de Villiers E.P."/>
            <person name="Brayton K.A."/>
            <person name="Louw E."/>
            <person name="Pretorius A."/>
            <person name="Faber F.E."/>
            <person name="van Heerden H."/>
            <person name="Josemans A."/>
            <person name="van Kleef M."/>
            <person name="Steyn H.C."/>
            <person name="van Strijp M.F."/>
            <person name="Zweygarth E."/>
            <person name="Jongejan F."/>
            <person name="Maillard J.C."/>
            <person name="Berthier D."/>
            <person name="Botha M."/>
            <person name="Joubert F."/>
            <person name="Corton C.H."/>
            <person name="Thomson N.R."/>
            <person name="Allsopp M.T."/>
            <person name="Allsopp B.A."/>
        </authorList>
    </citation>
    <scope>NUCLEOTIDE SEQUENCE [LARGE SCALE GENOMIC DNA]</scope>
    <source>
        <strain>Welgevonden</strain>
    </source>
</reference>
<reference key="2">
    <citation type="journal article" date="2006" name="J. Bacteriol.">
        <title>Comparative genomic analysis of three strains of Ehrlichia ruminantium reveals an active process of genome size plasticity.</title>
        <authorList>
            <person name="Frutos R."/>
            <person name="Viari A."/>
            <person name="Ferraz C."/>
            <person name="Morgat A."/>
            <person name="Eychenie S."/>
            <person name="Kandassamy Y."/>
            <person name="Chantal I."/>
            <person name="Bensaid A."/>
            <person name="Coissac E."/>
            <person name="Vachiery N."/>
            <person name="Demaille J."/>
            <person name="Martinez D."/>
        </authorList>
    </citation>
    <scope>NUCLEOTIDE SEQUENCE [LARGE SCALE GENOMIC DNA]</scope>
    <source>
        <strain>Welgevonden</strain>
    </source>
</reference>
<organism>
    <name type="scientific">Ehrlichia ruminantium (strain Welgevonden)</name>
    <dbReference type="NCBI Taxonomy" id="254945"/>
    <lineage>
        <taxon>Bacteria</taxon>
        <taxon>Pseudomonadati</taxon>
        <taxon>Pseudomonadota</taxon>
        <taxon>Alphaproteobacteria</taxon>
        <taxon>Rickettsiales</taxon>
        <taxon>Anaplasmataceae</taxon>
        <taxon>Ehrlichia</taxon>
    </lineage>
</organism>
<dbReference type="EMBL" id="CR767821">
    <property type="protein sequence ID" value="CAH58023.1"/>
    <property type="molecule type" value="Genomic_DNA"/>
</dbReference>
<dbReference type="EMBL" id="CR925678">
    <property type="protein sequence ID" value="CAI26805.1"/>
    <property type="molecule type" value="Genomic_DNA"/>
</dbReference>
<dbReference type="RefSeq" id="WP_011154987.1">
    <property type="nucleotide sequence ID" value="NC_005295.2"/>
</dbReference>
<dbReference type="SMR" id="Q5HBM4"/>
<dbReference type="GeneID" id="33057898"/>
<dbReference type="KEGG" id="eru:Erum3060"/>
<dbReference type="KEGG" id="erw:ERWE_CDS_03110"/>
<dbReference type="eggNOG" id="COG2332">
    <property type="taxonomic scope" value="Bacteria"/>
</dbReference>
<dbReference type="HOGENOM" id="CLU_079503_1_1_5"/>
<dbReference type="Proteomes" id="UP000001021">
    <property type="component" value="Chromosome"/>
</dbReference>
<dbReference type="GO" id="GO:0005886">
    <property type="term" value="C:plasma membrane"/>
    <property type="evidence" value="ECO:0007669"/>
    <property type="project" value="UniProtKB-SubCell"/>
</dbReference>
<dbReference type="GO" id="GO:0020037">
    <property type="term" value="F:heme binding"/>
    <property type="evidence" value="ECO:0007669"/>
    <property type="project" value="InterPro"/>
</dbReference>
<dbReference type="GO" id="GO:0046872">
    <property type="term" value="F:metal ion binding"/>
    <property type="evidence" value="ECO:0007669"/>
    <property type="project" value="UniProtKB-KW"/>
</dbReference>
<dbReference type="GO" id="GO:0017004">
    <property type="term" value="P:cytochrome complex assembly"/>
    <property type="evidence" value="ECO:0007669"/>
    <property type="project" value="UniProtKB-KW"/>
</dbReference>
<dbReference type="Gene3D" id="2.40.50.140">
    <property type="entry name" value="Nucleic acid-binding proteins"/>
    <property type="match status" value="1"/>
</dbReference>
<dbReference type="HAMAP" id="MF_01959">
    <property type="entry name" value="CcmE"/>
    <property type="match status" value="1"/>
</dbReference>
<dbReference type="InterPro" id="IPR004329">
    <property type="entry name" value="CcmE"/>
</dbReference>
<dbReference type="InterPro" id="IPR036127">
    <property type="entry name" value="CcmE-like_sf"/>
</dbReference>
<dbReference type="InterPro" id="IPR012340">
    <property type="entry name" value="NA-bd_OB-fold"/>
</dbReference>
<dbReference type="NCBIfam" id="NF009727">
    <property type="entry name" value="PRK13254.1-1"/>
    <property type="match status" value="1"/>
</dbReference>
<dbReference type="PANTHER" id="PTHR34128">
    <property type="entry name" value="CYTOCHROME C-TYPE BIOGENESIS PROTEIN CCME HOMOLOG, MITOCHONDRIAL"/>
    <property type="match status" value="1"/>
</dbReference>
<dbReference type="PANTHER" id="PTHR34128:SF2">
    <property type="entry name" value="CYTOCHROME C-TYPE BIOGENESIS PROTEIN CCME HOMOLOG, MITOCHONDRIAL"/>
    <property type="match status" value="1"/>
</dbReference>
<dbReference type="Pfam" id="PF03100">
    <property type="entry name" value="CcmE"/>
    <property type="match status" value="1"/>
</dbReference>
<dbReference type="SUPFAM" id="SSF82093">
    <property type="entry name" value="Heme chaperone CcmE"/>
    <property type="match status" value="1"/>
</dbReference>
<comment type="function">
    <text evidence="1">Heme chaperone required for the biogenesis of c-type cytochromes. Transiently binds heme delivered by CcmC and transfers the heme to apo-cytochromes in a process facilitated by CcmF and CcmH.</text>
</comment>
<comment type="subcellular location">
    <subcellularLocation>
        <location evidence="1">Cell inner membrane</location>
        <topology evidence="1">Single-pass type II membrane protein</topology>
        <orientation evidence="1">Periplasmic side</orientation>
    </subcellularLocation>
</comment>
<comment type="similarity">
    <text evidence="1">Belongs to the CcmE/CycJ family.</text>
</comment>